<feature type="chain" id="PRO_1000057758" description="Large-conductance mechanosensitive channel">
    <location>
        <begin position="1"/>
        <end position="137"/>
    </location>
</feature>
<feature type="transmembrane region" description="Helical" evidence="1">
    <location>
        <begin position="9"/>
        <end position="29"/>
    </location>
</feature>
<feature type="transmembrane region" description="Helical" evidence="1">
    <location>
        <begin position="79"/>
        <end position="99"/>
    </location>
</feature>
<reference key="1">
    <citation type="submission" date="2007-06" db="EMBL/GenBank/DDBJ databases">
        <authorList>
            <person name="Dodson R.J."/>
            <person name="Harkins D."/>
            <person name="Paulsen I.T."/>
        </authorList>
    </citation>
    <scope>NUCLEOTIDE SEQUENCE [LARGE SCALE GENOMIC DNA]</scope>
    <source>
        <strain>DSM 24068 / PA7</strain>
    </source>
</reference>
<accession>A6VC02</accession>
<evidence type="ECO:0000255" key="1">
    <source>
        <dbReference type="HAMAP-Rule" id="MF_00115"/>
    </source>
</evidence>
<comment type="function">
    <text evidence="1">Channel that opens in response to stretch forces in the membrane lipid bilayer. May participate in the regulation of osmotic pressure changes within the cell.</text>
</comment>
<comment type="subunit">
    <text evidence="1">Homopentamer.</text>
</comment>
<comment type="subcellular location">
    <subcellularLocation>
        <location evidence="1">Cell inner membrane</location>
        <topology evidence="1">Multi-pass membrane protein</topology>
    </subcellularLocation>
</comment>
<comment type="similarity">
    <text evidence="1">Belongs to the MscL family.</text>
</comment>
<gene>
    <name evidence="1" type="primary">mscL</name>
    <name type="ordered locus">PSPA7_5255</name>
</gene>
<protein>
    <recommendedName>
        <fullName evidence="1">Large-conductance mechanosensitive channel</fullName>
    </recommendedName>
</protein>
<keyword id="KW-0997">Cell inner membrane</keyword>
<keyword id="KW-1003">Cell membrane</keyword>
<keyword id="KW-0407">Ion channel</keyword>
<keyword id="KW-0406">Ion transport</keyword>
<keyword id="KW-0472">Membrane</keyword>
<keyword id="KW-0812">Transmembrane</keyword>
<keyword id="KW-1133">Transmembrane helix</keyword>
<keyword id="KW-0813">Transport</keyword>
<organism>
    <name type="scientific">Pseudomonas paraeruginosa (strain DSM 24068 / PA7)</name>
    <name type="common">Pseudomonas aeruginosa (strain PA7)</name>
    <dbReference type="NCBI Taxonomy" id="381754"/>
    <lineage>
        <taxon>Bacteria</taxon>
        <taxon>Pseudomonadati</taxon>
        <taxon>Pseudomonadota</taxon>
        <taxon>Gammaproteobacteria</taxon>
        <taxon>Pseudomonadales</taxon>
        <taxon>Pseudomonadaceae</taxon>
        <taxon>Pseudomonas</taxon>
        <taxon>Pseudomonas paraeruginosa</taxon>
    </lineage>
</organism>
<dbReference type="EMBL" id="CP000744">
    <property type="protein sequence ID" value="ABR86036.1"/>
    <property type="molecule type" value="Genomic_DNA"/>
</dbReference>
<dbReference type="RefSeq" id="WP_003153067.1">
    <property type="nucleotide sequence ID" value="NC_009656.1"/>
</dbReference>
<dbReference type="SMR" id="A6VC02"/>
<dbReference type="GeneID" id="77223120"/>
<dbReference type="KEGG" id="pap:PSPA7_5255"/>
<dbReference type="HOGENOM" id="CLU_095787_0_0_6"/>
<dbReference type="Proteomes" id="UP000001582">
    <property type="component" value="Chromosome"/>
</dbReference>
<dbReference type="GO" id="GO:0005886">
    <property type="term" value="C:plasma membrane"/>
    <property type="evidence" value="ECO:0007669"/>
    <property type="project" value="UniProtKB-SubCell"/>
</dbReference>
<dbReference type="GO" id="GO:0008381">
    <property type="term" value="F:mechanosensitive monoatomic ion channel activity"/>
    <property type="evidence" value="ECO:0007669"/>
    <property type="project" value="UniProtKB-UniRule"/>
</dbReference>
<dbReference type="FunFam" id="1.10.1200.120:FF:000001">
    <property type="entry name" value="Large-conductance mechanosensitive channel"/>
    <property type="match status" value="1"/>
</dbReference>
<dbReference type="Gene3D" id="1.10.1200.120">
    <property type="entry name" value="Large-conductance mechanosensitive channel, MscL, domain 1"/>
    <property type="match status" value="1"/>
</dbReference>
<dbReference type="HAMAP" id="MF_00115">
    <property type="entry name" value="MscL"/>
    <property type="match status" value="1"/>
</dbReference>
<dbReference type="InterPro" id="IPR019823">
    <property type="entry name" value="Mechanosensitive_channel_CS"/>
</dbReference>
<dbReference type="InterPro" id="IPR001185">
    <property type="entry name" value="MS_channel"/>
</dbReference>
<dbReference type="InterPro" id="IPR037673">
    <property type="entry name" value="MSC/AndL"/>
</dbReference>
<dbReference type="InterPro" id="IPR036019">
    <property type="entry name" value="MscL_channel"/>
</dbReference>
<dbReference type="NCBIfam" id="TIGR00220">
    <property type="entry name" value="mscL"/>
    <property type="match status" value="1"/>
</dbReference>
<dbReference type="NCBIfam" id="NF001843">
    <property type="entry name" value="PRK00567.1-4"/>
    <property type="match status" value="1"/>
</dbReference>
<dbReference type="PANTHER" id="PTHR30266:SF2">
    <property type="entry name" value="LARGE-CONDUCTANCE MECHANOSENSITIVE CHANNEL"/>
    <property type="match status" value="1"/>
</dbReference>
<dbReference type="PANTHER" id="PTHR30266">
    <property type="entry name" value="MECHANOSENSITIVE CHANNEL MSCL"/>
    <property type="match status" value="1"/>
</dbReference>
<dbReference type="Pfam" id="PF01741">
    <property type="entry name" value="MscL"/>
    <property type="match status" value="1"/>
</dbReference>
<dbReference type="PRINTS" id="PR01264">
    <property type="entry name" value="MECHCHANNEL"/>
</dbReference>
<dbReference type="SUPFAM" id="SSF81330">
    <property type="entry name" value="Gated mechanosensitive channel"/>
    <property type="match status" value="1"/>
</dbReference>
<dbReference type="PROSITE" id="PS01327">
    <property type="entry name" value="MSCL"/>
    <property type="match status" value="1"/>
</dbReference>
<sequence>MGLLSEFKAFAVKGNVVDMAVGIIIGAAFGKIVSSFVGDVIMPPIGLLIGGVDFSDLAITLKAAEGDVPAVVLAYGKFIQTILDFVIVAFAIFMGVKAINRLKREEAVAPSEPPVPSAEETLLTEIRDLLKAQQNKP</sequence>
<proteinExistence type="inferred from homology"/>
<name>MSCL_PSEP7</name>